<dbReference type="EC" id="4.1.1.65" evidence="1"/>
<dbReference type="EMBL" id="CP000439">
    <property type="protein sequence ID" value="ABK89377.1"/>
    <property type="molecule type" value="Genomic_DNA"/>
</dbReference>
<dbReference type="SMR" id="A0Q562"/>
<dbReference type="KEGG" id="ftn:FTN_0481"/>
<dbReference type="KEGG" id="ftx:AW25_1549"/>
<dbReference type="BioCyc" id="FTUL401614:G1G75-503-MONOMER"/>
<dbReference type="UniPathway" id="UPA00558">
    <property type="reaction ID" value="UER00616"/>
</dbReference>
<dbReference type="Proteomes" id="UP000000762">
    <property type="component" value="Chromosome"/>
</dbReference>
<dbReference type="GO" id="GO:0005886">
    <property type="term" value="C:plasma membrane"/>
    <property type="evidence" value="ECO:0007669"/>
    <property type="project" value="UniProtKB-SubCell"/>
</dbReference>
<dbReference type="GO" id="GO:0004609">
    <property type="term" value="F:phosphatidylserine decarboxylase activity"/>
    <property type="evidence" value="ECO:0007669"/>
    <property type="project" value="UniProtKB-UniRule"/>
</dbReference>
<dbReference type="GO" id="GO:0006646">
    <property type="term" value="P:phosphatidylethanolamine biosynthetic process"/>
    <property type="evidence" value="ECO:0007669"/>
    <property type="project" value="UniProtKB-UniRule"/>
</dbReference>
<dbReference type="HAMAP" id="MF_00662">
    <property type="entry name" value="PS_decarb_PSD_B_type1"/>
    <property type="match status" value="1"/>
</dbReference>
<dbReference type="InterPro" id="IPR003817">
    <property type="entry name" value="PS_Dcarbxylase"/>
</dbReference>
<dbReference type="InterPro" id="IPR033177">
    <property type="entry name" value="PSD-B"/>
</dbReference>
<dbReference type="InterPro" id="IPR033178">
    <property type="entry name" value="PSD_type1_pro"/>
</dbReference>
<dbReference type="NCBIfam" id="TIGR00163">
    <property type="entry name" value="PS_decarb"/>
    <property type="match status" value="1"/>
</dbReference>
<dbReference type="PANTHER" id="PTHR10067">
    <property type="entry name" value="PHOSPHATIDYLSERINE DECARBOXYLASE"/>
    <property type="match status" value="1"/>
</dbReference>
<dbReference type="PANTHER" id="PTHR10067:SF6">
    <property type="entry name" value="PHOSPHATIDYLSERINE DECARBOXYLASE PROENZYME, MITOCHONDRIAL"/>
    <property type="match status" value="1"/>
</dbReference>
<dbReference type="Pfam" id="PF02666">
    <property type="entry name" value="PS_Dcarbxylase"/>
    <property type="match status" value="1"/>
</dbReference>
<comment type="function">
    <text evidence="1">Catalyzes the formation of phosphatidylethanolamine (PtdEtn) from phosphatidylserine (PtdSer).</text>
</comment>
<comment type="catalytic activity">
    <reaction evidence="1">
        <text>a 1,2-diacyl-sn-glycero-3-phospho-L-serine + H(+) = a 1,2-diacyl-sn-glycero-3-phosphoethanolamine + CO2</text>
        <dbReference type="Rhea" id="RHEA:20828"/>
        <dbReference type="ChEBI" id="CHEBI:15378"/>
        <dbReference type="ChEBI" id="CHEBI:16526"/>
        <dbReference type="ChEBI" id="CHEBI:57262"/>
        <dbReference type="ChEBI" id="CHEBI:64612"/>
        <dbReference type="EC" id="4.1.1.65"/>
    </reaction>
</comment>
<comment type="cofactor">
    <cofactor evidence="1">
        <name>pyruvate</name>
        <dbReference type="ChEBI" id="CHEBI:15361"/>
    </cofactor>
    <text evidence="1">Binds 1 pyruvoyl group covalently per subunit.</text>
</comment>
<comment type="pathway">
    <text evidence="1">Phospholipid metabolism; phosphatidylethanolamine biosynthesis; phosphatidylethanolamine from CDP-diacylglycerol: step 2/2.</text>
</comment>
<comment type="subunit">
    <text evidence="1">Heterodimer of a large membrane-associated beta subunit and a small pyruvoyl-containing alpha subunit.</text>
</comment>
<comment type="subcellular location">
    <subcellularLocation>
        <location evidence="1">Cell membrane</location>
        <topology evidence="1">Peripheral membrane protein</topology>
    </subcellularLocation>
</comment>
<comment type="PTM">
    <text evidence="1">Is synthesized initially as an inactive proenzyme. Formation of the active enzyme involves a self-maturation process in which the active site pyruvoyl group is generated from an internal serine residue via an autocatalytic post-translational modification. Two non-identical subunits are generated from the proenzyme in this reaction, and the pyruvate is formed at the N-terminus of the alpha chain, which is derived from the carboxyl end of the proenzyme. The autoendoproteolytic cleavage occurs by a canonical serine protease mechanism, in which the side chain hydroxyl group of the serine supplies its oxygen atom to form the C-terminus of the beta chain, while the remainder of the serine residue undergoes an oxidative deamination to produce ammonia and the pyruvoyl prosthetic group on the alpha chain. During this reaction, the Ser that is part of the protease active site of the proenzyme becomes the pyruvoyl prosthetic group, which constitutes an essential element of the active site of the mature decarboxylase.</text>
</comment>
<comment type="similarity">
    <text evidence="1">Belongs to the phosphatidylserine decarboxylase family. PSD-B subfamily. Prokaryotic type I sub-subfamily.</text>
</comment>
<accession>A0Q562</accession>
<feature type="chain" id="PRO_1000026546" description="Phosphatidylserine decarboxylase beta chain" evidence="1">
    <location>
        <begin position="1"/>
        <end position="247"/>
    </location>
</feature>
<feature type="chain" id="PRO_1000026547" description="Phosphatidylserine decarboxylase alpha chain" evidence="1">
    <location>
        <begin position="248"/>
        <end position="283"/>
    </location>
</feature>
<feature type="active site" description="Charge relay system; for autoendoproteolytic cleavage activity" evidence="1">
    <location>
        <position position="90"/>
    </location>
</feature>
<feature type="active site" description="Charge relay system; for autoendoproteolytic cleavage activity" evidence="1">
    <location>
        <position position="143"/>
    </location>
</feature>
<feature type="active site" description="Charge relay system; for autoendoproteolytic cleavage activity" evidence="1">
    <location>
        <position position="248"/>
    </location>
</feature>
<feature type="active site" description="Schiff-base intermediate with substrate; via pyruvic acid; for decarboxylase activity" evidence="1">
    <location>
        <position position="248"/>
    </location>
</feature>
<feature type="site" description="Cleavage (non-hydrolytic); by autocatalysis" evidence="1">
    <location>
        <begin position="247"/>
        <end position="248"/>
    </location>
</feature>
<feature type="modified residue" description="Pyruvic acid (Ser); by autocatalysis" evidence="1">
    <location>
        <position position="248"/>
    </location>
</feature>
<protein>
    <recommendedName>
        <fullName evidence="1">Phosphatidylserine decarboxylase proenzyme</fullName>
        <ecNumber evidence="1">4.1.1.65</ecNumber>
    </recommendedName>
    <component>
        <recommendedName>
            <fullName evidence="1">Phosphatidylserine decarboxylase alpha chain</fullName>
        </recommendedName>
    </component>
    <component>
        <recommendedName>
            <fullName evidence="1">Phosphatidylserine decarboxylase beta chain</fullName>
        </recommendedName>
    </component>
</protein>
<reference key="1">
    <citation type="journal article" date="2007" name="Genome Biol.">
        <title>Comparison of Francisella tularensis genomes reveals evolutionary events associated with the emergence of human pathogenic strains.</title>
        <authorList>
            <person name="Rohmer L."/>
            <person name="Fong C."/>
            <person name="Abmayr S."/>
            <person name="Wasnick M."/>
            <person name="Larson Freeman T.J."/>
            <person name="Radey M."/>
            <person name="Guina T."/>
            <person name="Svensson K."/>
            <person name="Hayden H.S."/>
            <person name="Jacobs M."/>
            <person name="Gallagher L.A."/>
            <person name="Manoil C."/>
            <person name="Ernst R.K."/>
            <person name="Drees B."/>
            <person name="Buckley D."/>
            <person name="Haugen E."/>
            <person name="Bovee D."/>
            <person name="Zhou Y."/>
            <person name="Chang J."/>
            <person name="Levy R."/>
            <person name="Lim R."/>
            <person name="Gillett W."/>
            <person name="Guenthener D."/>
            <person name="Kang A."/>
            <person name="Shaffer S.A."/>
            <person name="Taylor G."/>
            <person name="Chen J."/>
            <person name="Gallis B."/>
            <person name="D'Argenio D.A."/>
            <person name="Forsman M."/>
            <person name="Olson M.V."/>
            <person name="Goodlett D.R."/>
            <person name="Kaul R."/>
            <person name="Miller S.I."/>
            <person name="Brittnacher M.J."/>
        </authorList>
    </citation>
    <scope>NUCLEOTIDE SEQUENCE [LARGE SCALE GENOMIC DNA]</scope>
    <source>
        <strain>U112</strain>
    </source>
</reference>
<proteinExistence type="inferred from homology"/>
<name>PSD_FRATN</name>
<sequence length="283" mass="32124">MRDNLFIYLQYLLPHALTSRLVSKLADSENKIIKNHLIKLAIKKFNINLVEAKETDISKYKSFNDFFIRELKDDLRPISNDKNVISSPADGVLSQFGTITDNSLIQAKGKLFSLESLIASSSTTNFTKFATIYLSPKDYHRVHMPIDGKLTKMVYIPGKLFSVNKITTSKVDNLFAKNERLICYFDTIIGEIAVIFVGALLVAGIETVWHGKIAPNYYKDIQTWDYNSAKFNIKFNKGDILGWFNFGSTVIILTSGNNVSFKFEENQNNIKIQVNQDLALITE</sequence>
<gene>
    <name evidence="1" type="primary">psd</name>
    <name type="ordered locus">FTN_0481</name>
</gene>
<keyword id="KW-1003">Cell membrane</keyword>
<keyword id="KW-0210">Decarboxylase</keyword>
<keyword id="KW-0444">Lipid biosynthesis</keyword>
<keyword id="KW-0443">Lipid metabolism</keyword>
<keyword id="KW-0456">Lyase</keyword>
<keyword id="KW-0472">Membrane</keyword>
<keyword id="KW-0594">Phospholipid biosynthesis</keyword>
<keyword id="KW-1208">Phospholipid metabolism</keyword>
<keyword id="KW-0670">Pyruvate</keyword>
<keyword id="KW-0865">Zymogen</keyword>
<organism>
    <name type="scientific">Francisella tularensis subsp. novicida (strain U112)</name>
    <dbReference type="NCBI Taxonomy" id="401614"/>
    <lineage>
        <taxon>Bacteria</taxon>
        <taxon>Pseudomonadati</taxon>
        <taxon>Pseudomonadota</taxon>
        <taxon>Gammaproteobacteria</taxon>
        <taxon>Thiotrichales</taxon>
        <taxon>Francisellaceae</taxon>
        <taxon>Francisella</taxon>
    </lineage>
</organism>
<evidence type="ECO:0000255" key="1">
    <source>
        <dbReference type="HAMAP-Rule" id="MF_00662"/>
    </source>
</evidence>